<gene>
    <name type="primary">isa2</name>
    <name type="ORF">SPBC3B9.17</name>
</gene>
<name>ISA2_SCHPO</name>
<sequence length="205" mass="23239">MLMKSRVNLLFKGPFFFRERCFQTLLNPVIAIRQLSHGSLRNSRSCRIDAKSNTLTKEIFPKINNEFKIKNRFYSSKLANDQFTLQEQCDEKGIPFILYVKDSAKKQLEKIAERKPEENSVLRVTVDGGGCHGYQVSFRMDNKIGNADTVFVRGKARVVADNISLPLISGSEIEYTNELIGSSFQLLNNPRAKTSCGCNVSFDVE</sequence>
<dbReference type="EMBL" id="CU329671">
    <property type="protein sequence ID" value="CAA17797.1"/>
    <property type="molecule type" value="Genomic_DNA"/>
</dbReference>
<dbReference type="PIR" id="T40356">
    <property type="entry name" value="T40356"/>
</dbReference>
<dbReference type="RefSeq" id="NP_596675.1">
    <property type="nucleotide sequence ID" value="NM_001022597.2"/>
</dbReference>
<dbReference type="SMR" id="O43045"/>
<dbReference type="BioGRID" id="277500">
    <property type="interactions" value="2"/>
</dbReference>
<dbReference type="FunCoup" id="O43045">
    <property type="interactions" value="326"/>
</dbReference>
<dbReference type="STRING" id="284812.O43045"/>
<dbReference type="PaxDb" id="4896-SPBC3B9.17.1"/>
<dbReference type="EnsemblFungi" id="SPBC3B9.17.1">
    <property type="protein sequence ID" value="SPBC3B9.17.1:pep"/>
    <property type="gene ID" value="SPBC3B9.17"/>
</dbReference>
<dbReference type="GeneID" id="2540984"/>
<dbReference type="KEGG" id="spo:2540984"/>
<dbReference type="PomBase" id="SPBC3B9.17">
    <property type="gene designation" value="isa2"/>
</dbReference>
<dbReference type="VEuPathDB" id="FungiDB:SPBC3B9.17"/>
<dbReference type="eggNOG" id="KOG1119">
    <property type="taxonomic scope" value="Eukaryota"/>
</dbReference>
<dbReference type="HOGENOM" id="CLU_069054_1_0_1"/>
<dbReference type="InParanoid" id="O43045"/>
<dbReference type="PhylomeDB" id="O43045"/>
<dbReference type="Reactome" id="R-SPO-1362409">
    <property type="pathway name" value="Mitochondrial iron-sulfur cluster biogenesis"/>
</dbReference>
<dbReference type="PRO" id="PR:O43045"/>
<dbReference type="Proteomes" id="UP000002485">
    <property type="component" value="Chromosome II"/>
</dbReference>
<dbReference type="GO" id="GO:0120510">
    <property type="term" value="C:mitochondrial [4Fe-4S] assembly complex"/>
    <property type="evidence" value="ECO:0000304"/>
    <property type="project" value="PomBase"/>
</dbReference>
<dbReference type="GO" id="GO:0005759">
    <property type="term" value="C:mitochondrial matrix"/>
    <property type="evidence" value="ECO:0007669"/>
    <property type="project" value="UniProtKB-SubCell"/>
</dbReference>
<dbReference type="GO" id="GO:0005739">
    <property type="term" value="C:mitochondrion"/>
    <property type="evidence" value="ECO:0000314"/>
    <property type="project" value="PomBase"/>
</dbReference>
<dbReference type="GO" id="GO:0051537">
    <property type="term" value="F:2 iron, 2 sulfur cluster binding"/>
    <property type="evidence" value="ECO:0000318"/>
    <property type="project" value="GO_Central"/>
</dbReference>
<dbReference type="GO" id="GO:0051539">
    <property type="term" value="F:4 iron, 4 sulfur cluster binding"/>
    <property type="evidence" value="ECO:0000318"/>
    <property type="project" value="GO_Central"/>
</dbReference>
<dbReference type="GO" id="GO:0005506">
    <property type="term" value="F:iron ion binding"/>
    <property type="evidence" value="ECO:0000318"/>
    <property type="project" value="GO_Central"/>
</dbReference>
<dbReference type="GO" id="GO:0044572">
    <property type="term" value="P:[4Fe-4S] cluster assembly"/>
    <property type="evidence" value="ECO:0000250"/>
    <property type="project" value="PomBase"/>
</dbReference>
<dbReference type="GO" id="GO:0016226">
    <property type="term" value="P:iron-sulfur cluster assembly"/>
    <property type="evidence" value="ECO:0000318"/>
    <property type="project" value="GO_Central"/>
</dbReference>
<dbReference type="FunFam" id="2.60.300.12:FF:000006">
    <property type="entry name" value="Iron-sulfur cluster assembly 2 mitochondrial"/>
    <property type="match status" value="1"/>
</dbReference>
<dbReference type="Gene3D" id="2.60.300.12">
    <property type="entry name" value="HesB-like domain"/>
    <property type="match status" value="1"/>
</dbReference>
<dbReference type="InterPro" id="IPR016092">
    <property type="entry name" value="FeS_cluster_insertion"/>
</dbReference>
<dbReference type="InterPro" id="IPR017870">
    <property type="entry name" value="FeS_cluster_insertion_CS"/>
</dbReference>
<dbReference type="InterPro" id="IPR035903">
    <property type="entry name" value="HesB-like_dom_sf"/>
</dbReference>
<dbReference type="NCBIfam" id="TIGR00049">
    <property type="entry name" value="iron-sulfur cluster assembly accessory protein"/>
    <property type="match status" value="1"/>
</dbReference>
<dbReference type="PANTHER" id="PTHR43011">
    <property type="entry name" value="IRON-SULFUR CLUSTER ASSEMBLY 2 HOMOLOG, MITOCHONDRIAL"/>
    <property type="match status" value="1"/>
</dbReference>
<dbReference type="PANTHER" id="PTHR43011:SF1">
    <property type="entry name" value="IRON-SULFUR CLUSTER ASSEMBLY 2 HOMOLOG, MITOCHONDRIAL"/>
    <property type="match status" value="1"/>
</dbReference>
<dbReference type="SUPFAM" id="SSF89360">
    <property type="entry name" value="HesB-like domain"/>
    <property type="match status" value="1"/>
</dbReference>
<dbReference type="PROSITE" id="PS01152">
    <property type="entry name" value="HESB"/>
    <property type="match status" value="1"/>
</dbReference>
<keyword id="KW-0408">Iron</keyword>
<keyword id="KW-0479">Metal-binding</keyword>
<keyword id="KW-0496">Mitochondrion</keyword>
<keyword id="KW-1185">Reference proteome</keyword>
<accession>O43045</accession>
<proteinExistence type="inferred from homology"/>
<evidence type="ECO:0000250" key="1"/>
<evidence type="ECO:0000250" key="2">
    <source>
        <dbReference type="UniProtKB" id="P0AAC8"/>
    </source>
</evidence>
<evidence type="ECO:0000305" key="3"/>
<protein>
    <recommendedName>
        <fullName>Iron-sulfur assembly protein 2</fullName>
    </recommendedName>
</protein>
<reference key="1">
    <citation type="journal article" date="2002" name="Nature">
        <title>The genome sequence of Schizosaccharomyces pombe.</title>
        <authorList>
            <person name="Wood V."/>
            <person name="Gwilliam R."/>
            <person name="Rajandream M.A."/>
            <person name="Lyne M.H."/>
            <person name="Lyne R."/>
            <person name="Stewart A."/>
            <person name="Sgouros J.G."/>
            <person name="Peat N."/>
            <person name="Hayles J."/>
            <person name="Baker S.G."/>
            <person name="Basham D."/>
            <person name="Bowman S."/>
            <person name="Brooks K."/>
            <person name="Brown D."/>
            <person name="Brown S."/>
            <person name="Chillingworth T."/>
            <person name="Churcher C.M."/>
            <person name="Collins M."/>
            <person name="Connor R."/>
            <person name="Cronin A."/>
            <person name="Davis P."/>
            <person name="Feltwell T."/>
            <person name="Fraser A."/>
            <person name="Gentles S."/>
            <person name="Goble A."/>
            <person name="Hamlin N."/>
            <person name="Harris D.E."/>
            <person name="Hidalgo J."/>
            <person name="Hodgson G."/>
            <person name="Holroyd S."/>
            <person name="Hornsby T."/>
            <person name="Howarth S."/>
            <person name="Huckle E.J."/>
            <person name="Hunt S."/>
            <person name="Jagels K."/>
            <person name="James K.D."/>
            <person name="Jones L."/>
            <person name="Jones M."/>
            <person name="Leather S."/>
            <person name="McDonald S."/>
            <person name="McLean J."/>
            <person name="Mooney P."/>
            <person name="Moule S."/>
            <person name="Mungall K.L."/>
            <person name="Murphy L.D."/>
            <person name="Niblett D."/>
            <person name="Odell C."/>
            <person name="Oliver K."/>
            <person name="O'Neil S."/>
            <person name="Pearson D."/>
            <person name="Quail M.A."/>
            <person name="Rabbinowitsch E."/>
            <person name="Rutherford K.M."/>
            <person name="Rutter S."/>
            <person name="Saunders D."/>
            <person name="Seeger K."/>
            <person name="Sharp S."/>
            <person name="Skelton J."/>
            <person name="Simmonds M.N."/>
            <person name="Squares R."/>
            <person name="Squares S."/>
            <person name="Stevens K."/>
            <person name="Taylor K."/>
            <person name="Taylor R.G."/>
            <person name="Tivey A."/>
            <person name="Walsh S.V."/>
            <person name="Warren T."/>
            <person name="Whitehead S."/>
            <person name="Woodward J.R."/>
            <person name="Volckaert G."/>
            <person name="Aert R."/>
            <person name="Robben J."/>
            <person name="Grymonprez B."/>
            <person name="Weltjens I."/>
            <person name="Vanstreels E."/>
            <person name="Rieger M."/>
            <person name="Schaefer M."/>
            <person name="Mueller-Auer S."/>
            <person name="Gabel C."/>
            <person name="Fuchs M."/>
            <person name="Duesterhoeft A."/>
            <person name="Fritzc C."/>
            <person name="Holzer E."/>
            <person name="Moestl D."/>
            <person name="Hilbert H."/>
            <person name="Borzym K."/>
            <person name="Langer I."/>
            <person name="Beck A."/>
            <person name="Lehrach H."/>
            <person name="Reinhardt R."/>
            <person name="Pohl T.M."/>
            <person name="Eger P."/>
            <person name="Zimmermann W."/>
            <person name="Wedler H."/>
            <person name="Wambutt R."/>
            <person name="Purnelle B."/>
            <person name="Goffeau A."/>
            <person name="Cadieu E."/>
            <person name="Dreano S."/>
            <person name="Gloux S."/>
            <person name="Lelaure V."/>
            <person name="Mottier S."/>
            <person name="Galibert F."/>
            <person name="Aves S.J."/>
            <person name="Xiang Z."/>
            <person name="Hunt C."/>
            <person name="Moore K."/>
            <person name="Hurst S.M."/>
            <person name="Lucas M."/>
            <person name="Rochet M."/>
            <person name="Gaillardin C."/>
            <person name="Tallada V.A."/>
            <person name="Garzon A."/>
            <person name="Thode G."/>
            <person name="Daga R.R."/>
            <person name="Cruzado L."/>
            <person name="Jimenez J."/>
            <person name="Sanchez M."/>
            <person name="del Rey F."/>
            <person name="Benito J."/>
            <person name="Dominguez A."/>
            <person name="Revuelta J.L."/>
            <person name="Moreno S."/>
            <person name="Armstrong J."/>
            <person name="Forsburg S.L."/>
            <person name="Cerutti L."/>
            <person name="Lowe T."/>
            <person name="McCombie W.R."/>
            <person name="Paulsen I."/>
            <person name="Potashkin J."/>
            <person name="Shpakovski G.V."/>
            <person name="Ussery D."/>
            <person name="Barrell B.G."/>
            <person name="Nurse P."/>
        </authorList>
    </citation>
    <scope>NUCLEOTIDE SEQUENCE [LARGE SCALE GENOMIC DNA]</scope>
    <source>
        <strain>972 / ATCC 24843</strain>
    </source>
</reference>
<feature type="chain" id="PRO_0000077037" description="Iron-sulfur assembly protein 2">
    <location>
        <begin position="1"/>
        <end position="205"/>
    </location>
</feature>
<feature type="binding site" evidence="2">
    <location>
        <position position="131"/>
    </location>
    <ligand>
        <name>Fe cation</name>
        <dbReference type="ChEBI" id="CHEBI:24875"/>
    </ligand>
</feature>
<feature type="binding site" evidence="2">
    <location>
        <position position="196"/>
    </location>
    <ligand>
        <name>Fe cation</name>
        <dbReference type="ChEBI" id="CHEBI:24875"/>
    </ligand>
</feature>
<feature type="binding site" evidence="2">
    <location>
        <position position="198"/>
    </location>
    <ligand>
        <name>Fe cation</name>
        <dbReference type="ChEBI" id="CHEBI:24875"/>
    </ligand>
</feature>
<organism>
    <name type="scientific">Schizosaccharomyces pombe (strain 972 / ATCC 24843)</name>
    <name type="common">Fission yeast</name>
    <dbReference type="NCBI Taxonomy" id="284812"/>
    <lineage>
        <taxon>Eukaryota</taxon>
        <taxon>Fungi</taxon>
        <taxon>Dikarya</taxon>
        <taxon>Ascomycota</taxon>
        <taxon>Taphrinomycotina</taxon>
        <taxon>Schizosaccharomycetes</taxon>
        <taxon>Schizosaccharomycetales</taxon>
        <taxon>Schizosaccharomycetaceae</taxon>
        <taxon>Schizosaccharomyces</taxon>
    </lineage>
</organism>
<comment type="function">
    <text evidence="1">Involved in the assembly of mitochondrial and cytoplasmic iron-sulfur proteins. Probably involved in the binding of an intermediate of Fe/S cluster assembly (By similarity).</text>
</comment>
<comment type="subcellular location">
    <subcellularLocation>
        <location evidence="1">Mitochondrion matrix</location>
    </subcellularLocation>
</comment>
<comment type="similarity">
    <text evidence="3">Belongs to the HesB/IscA family.</text>
</comment>